<dbReference type="EMBL" id="AE016879">
    <property type="protein sequence ID" value="AAP25836.1"/>
    <property type="molecule type" value="Genomic_DNA"/>
</dbReference>
<dbReference type="EMBL" id="AE017334">
    <property type="protein sequence ID" value="AAT31060.1"/>
    <property type="molecule type" value="Genomic_DNA"/>
</dbReference>
<dbReference type="EMBL" id="AE017225">
    <property type="protein sequence ID" value="AAT54116.1"/>
    <property type="molecule type" value="Genomic_DNA"/>
</dbReference>
<dbReference type="RefSeq" id="NP_844350.1">
    <property type="nucleotide sequence ID" value="NC_003997.3"/>
</dbReference>
<dbReference type="RefSeq" id="WP_001205522.1">
    <property type="nucleotide sequence ID" value="NZ_WXXJ01000007.1"/>
</dbReference>
<dbReference type="RefSeq" id="YP_028065.1">
    <property type="nucleotide sequence ID" value="NC_005945.1"/>
</dbReference>
<dbReference type="SMR" id="Q81RU6"/>
<dbReference type="STRING" id="261594.GBAA_1941"/>
<dbReference type="DNASU" id="1086066"/>
<dbReference type="GeneID" id="45021867"/>
<dbReference type="KEGG" id="ban:BA_1941"/>
<dbReference type="KEGG" id="bar:GBAA_1941"/>
<dbReference type="KEGG" id="bat:BAS1801"/>
<dbReference type="PATRIC" id="fig|198094.11.peg.1913"/>
<dbReference type="eggNOG" id="COG1846">
    <property type="taxonomic scope" value="Bacteria"/>
</dbReference>
<dbReference type="HOGENOM" id="CLU_083287_27_2_9"/>
<dbReference type="OMA" id="MQILHES"/>
<dbReference type="OrthoDB" id="158803at2"/>
<dbReference type="Proteomes" id="UP000000427">
    <property type="component" value="Chromosome"/>
</dbReference>
<dbReference type="Proteomes" id="UP000000594">
    <property type="component" value="Chromosome"/>
</dbReference>
<dbReference type="GO" id="GO:0003677">
    <property type="term" value="F:DNA binding"/>
    <property type="evidence" value="ECO:0007669"/>
    <property type="project" value="UniProtKB-KW"/>
</dbReference>
<dbReference type="GO" id="GO:0003700">
    <property type="term" value="F:DNA-binding transcription factor activity"/>
    <property type="evidence" value="ECO:0007669"/>
    <property type="project" value="InterPro"/>
</dbReference>
<dbReference type="CDD" id="cd00090">
    <property type="entry name" value="HTH_ARSR"/>
    <property type="match status" value="1"/>
</dbReference>
<dbReference type="FunFam" id="1.10.10.10:FF:000281">
    <property type="entry name" value="MarR family transcriptional regulator"/>
    <property type="match status" value="1"/>
</dbReference>
<dbReference type="Gene3D" id="1.10.10.10">
    <property type="entry name" value="Winged helix-like DNA-binding domain superfamily/Winged helix DNA-binding domain"/>
    <property type="match status" value="1"/>
</dbReference>
<dbReference type="InterPro" id="IPR011991">
    <property type="entry name" value="ArsR-like_HTH"/>
</dbReference>
<dbReference type="InterPro" id="IPR000835">
    <property type="entry name" value="HTH_MarR-typ"/>
</dbReference>
<dbReference type="InterPro" id="IPR036388">
    <property type="entry name" value="WH-like_DNA-bd_sf"/>
</dbReference>
<dbReference type="InterPro" id="IPR036390">
    <property type="entry name" value="WH_DNA-bd_sf"/>
</dbReference>
<dbReference type="PANTHER" id="PTHR42756">
    <property type="entry name" value="TRANSCRIPTIONAL REGULATOR, MARR"/>
    <property type="match status" value="1"/>
</dbReference>
<dbReference type="PANTHER" id="PTHR42756:SF1">
    <property type="entry name" value="TRANSCRIPTIONAL REPRESSOR OF EMRAB OPERON"/>
    <property type="match status" value="1"/>
</dbReference>
<dbReference type="Pfam" id="PF01047">
    <property type="entry name" value="MarR"/>
    <property type="match status" value="1"/>
</dbReference>
<dbReference type="PRINTS" id="PR00598">
    <property type="entry name" value="HTHMARR"/>
</dbReference>
<dbReference type="SMART" id="SM00347">
    <property type="entry name" value="HTH_MARR"/>
    <property type="match status" value="1"/>
</dbReference>
<dbReference type="SUPFAM" id="SSF46785">
    <property type="entry name" value="Winged helix' DNA-binding domain"/>
    <property type="match status" value="1"/>
</dbReference>
<dbReference type="PROSITE" id="PS50995">
    <property type="entry name" value="HTH_MARR_2"/>
    <property type="match status" value="1"/>
</dbReference>
<comment type="induction">
    <text evidence="2">Up-regulated following infection of host macrophages.</text>
</comment>
<comment type="miscellaneous">
    <text>Deletion results in virulence attenuation.</text>
</comment>
<sequence>MRDNTIGSLIWLRLIRFTNQSNQMSNEFLKRFDLTTAQFDVLLQIRTYQPLTQMELAEKVTVTQGGISRMLTRLEKEGYIVRKQDWKTKTISLTEQGEAALERALPEQLAFQSSFFDDVLNEEEQKILYELMTKVHKHSEKKELPKE</sequence>
<feature type="chain" id="PRO_0000293590" description="Uncharacterized HTH-type transcriptional regulator BA_1941/GBAA_1941/BAS1801">
    <location>
        <begin position="1"/>
        <end position="147"/>
    </location>
</feature>
<feature type="domain" description="HTH marR-type" evidence="1">
    <location>
        <begin position="1"/>
        <end position="137"/>
    </location>
</feature>
<feature type="DNA-binding region" description="H-T-H motif" evidence="1">
    <location>
        <begin position="53"/>
        <end position="76"/>
    </location>
</feature>
<organism>
    <name type="scientific">Bacillus anthracis</name>
    <dbReference type="NCBI Taxonomy" id="1392"/>
    <lineage>
        <taxon>Bacteria</taxon>
        <taxon>Bacillati</taxon>
        <taxon>Bacillota</taxon>
        <taxon>Bacilli</taxon>
        <taxon>Bacillales</taxon>
        <taxon>Bacillaceae</taxon>
        <taxon>Bacillus</taxon>
        <taxon>Bacillus cereus group</taxon>
    </lineage>
</organism>
<gene>
    <name type="ordered locus">BA_1941</name>
    <name type="ordered locus">GBAA_1941</name>
    <name type="ordered locus">BAS1801</name>
</gene>
<protein>
    <recommendedName>
        <fullName>Uncharacterized HTH-type transcriptional regulator BA_1941/GBAA_1941/BAS1801</fullName>
    </recommendedName>
</protein>
<evidence type="ECO:0000255" key="1">
    <source>
        <dbReference type="PROSITE-ProRule" id="PRU00345"/>
    </source>
</evidence>
<evidence type="ECO:0000269" key="2">
    <source>
    </source>
</evidence>
<reference key="1">
    <citation type="journal article" date="2003" name="Nature">
        <title>The genome sequence of Bacillus anthracis Ames and comparison to closely related bacteria.</title>
        <authorList>
            <person name="Read T.D."/>
            <person name="Peterson S.N."/>
            <person name="Tourasse N.J."/>
            <person name="Baillie L.W."/>
            <person name="Paulsen I.T."/>
            <person name="Nelson K.E."/>
            <person name="Tettelin H."/>
            <person name="Fouts D.E."/>
            <person name="Eisen J.A."/>
            <person name="Gill S.R."/>
            <person name="Holtzapple E.K."/>
            <person name="Okstad O.A."/>
            <person name="Helgason E."/>
            <person name="Rilstone J."/>
            <person name="Wu M."/>
            <person name="Kolonay J.F."/>
            <person name="Beanan M.J."/>
            <person name="Dodson R.J."/>
            <person name="Brinkac L.M."/>
            <person name="Gwinn M.L."/>
            <person name="DeBoy R.T."/>
            <person name="Madpu R."/>
            <person name="Daugherty S.C."/>
            <person name="Durkin A.S."/>
            <person name="Haft D.H."/>
            <person name="Nelson W.C."/>
            <person name="Peterson J.D."/>
            <person name="Pop M."/>
            <person name="Khouri H.M."/>
            <person name="Radune D."/>
            <person name="Benton J.L."/>
            <person name="Mahamoud Y."/>
            <person name="Jiang L."/>
            <person name="Hance I.R."/>
            <person name="Weidman J.F."/>
            <person name="Berry K.J."/>
            <person name="Plaut R.D."/>
            <person name="Wolf A.M."/>
            <person name="Watkins K.L."/>
            <person name="Nierman W.C."/>
            <person name="Hazen A."/>
            <person name="Cline R.T."/>
            <person name="Redmond C."/>
            <person name="Thwaite J.E."/>
            <person name="White O."/>
            <person name="Salzberg S.L."/>
            <person name="Thomason B."/>
            <person name="Friedlander A.M."/>
            <person name="Koehler T.M."/>
            <person name="Hanna P.C."/>
            <person name="Kolstoe A.-B."/>
            <person name="Fraser C.M."/>
        </authorList>
    </citation>
    <scope>NUCLEOTIDE SEQUENCE [LARGE SCALE GENOMIC DNA]</scope>
    <source>
        <strain>Ames / isolate Porton</strain>
    </source>
</reference>
<reference key="2">
    <citation type="journal article" date="2009" name="J. Bacteriol.">
        <title>The complete genome sequence of Bacillus anthracis Ames 'Ancestor'.</title>
        <authorList>
            <person name="Ravel J."/>
            <person name="Jiang L."/>
            <person name="Stanley S.T."/>
            <person name="Wilson M.R."/>
            <person name="Decker R.S."/>
            <person name="Read T.D."/>
            <person name="Worsham P."/>
            <person name="Keim P.S."/>
            <person name="Salzberg S.L."/>
            <person name="Fraser-Liggett C.M."/>
            <person name="Rasko D.A."/>
        </authorList>
    </citation>
    <scope>NUCLEOTIDE SEQUENCE [LARGE SCALE GENOMIC DNA]</scope>
    <source>
        <strain>Ames ancestor</strain>
    </source>
</reference>
<reference key="3">
    <citation type="submission" date="2004-01" db="EMBL/GenBank/DDBJ databases">
        <title>Complete genome sequence of Bacillus anthracis Sterne.</title>
        <authorList>
            <person name="Brettin T.S."/>
            <person name="Bruce D."/>
            <person name="Challacombe J.F."/>
            <person name="Gilna P."/>
            <person name="Han C."/>
            <person name="Hill K."/>
            <person name="Hitchcock P."/>
            <person name="Jackson P."/>
            <person name="Keim P."/>
            <person name="Longmire J."/>
            <person name="Lucas S."/>
            <person name="Okinaka R."/>
            <person name="Richardson P."/>
            <person name="Rubin E."/>
            <person name="Tice H."/>
        </authorList>
    </citation>
    <scope>NUCLEOTIDE SEQUENCE [LARGE SCALE GENOMIC DNA]</scope>
    <source>
        <strain>Sterne</strain>
    </source>
</reference>
<reference key="4">
    <citation type="journal article" date="2007" name="Infect. Immun.">
        <title>Transcriptional profiling of Bacillus anthracis during infection of host macrophages.</title>
        <authorList>
            <person name="Bergman N.H."/>
            <person name="Anderson E.C."/>
            <person name="Swenson E.E."/>
            <person name="Janes B.K."/>
            <person name="Fisher N."/>
            <person name="Niemeyer M.M."/>
            <person name="Miyoshi A.D."/>
            <person name="Hanna P.C."/>
        </authorList>
    </citation>
    <scope>INDUCTION</scope>
    <scope>MUTANT STUDIES</scope>
    <source>
        <strain>Sterne</strain>
    </source>
</reference>
<accession>Q81RU6</accession>
<accession>Q6I023</accession>
<accession>Q6KU02</accession>
<proteinExistence type="evidence at transcript level"/>
<name>Y1941_BACAN</name>
<keyword id="KW-0238">DNA-binding</keyword>
<keyword id="KW-1185">Reference proteome</keyword>
<keyword id="KW-0804">Transcription</keyword>
<keyword id="KW-0805">Transcription regulation</keyword>